<name>LEA14_GOSHI</name>
<gene>
    <name type="primary">LEA14-A</name>
</gene>
<protein>
    <recommendedName>
        <fullName>Late embryogenesis abundant protein Lea14-A</fullName>
    </recommendedName>
</protein>
<reference key="1">
    <citation type="journal article" date="1993" name="Plant Physiol.">
        <title>Cotton Lea5 and Lea14 encode atypical late embryogenesis-abundant proteins.</title>
        <authorList>
            <person name="Galau G.A."/>
            <person name="Wang H.Y.-C."/>
            <person name="Hughes D.W."/>
        </authorList>
    </citation>
    <scope>NUCLEOTIDE SEQUENCE [GENOMIC DNA / MRNA]</scope>
    <source>
        <strain>cv. Coker 201</strain>
        <tissue>Cotyledon</tissue>
    </source>
</reference>
<dbReference type="EMBL" id="M88322">
    <property type="protein sequence ID" value="AAA18543.1"/>
    <property type="molecule type" value="mRNA"/>
</dbReference>
<dbReference type="EMBL" id="M88321">
    <property type="protein sequence ID" value="AAA18542.1"/>
    <property type="molecule type" value="Genomic_DNA"/>
</dbReference>
<dbReference type="PIR" id="T09875">
    <property type="entry name" value="T09875"/>
</dbReference>
<dbReference type="RefSeq" id="XP_016708350.1">
    <property type="nucleotide sequence ID" value="XM_016852861.1"/>
</dbReference>
<dbReference type="SMR" id="P46518"/>
<dbReference type="STRING" id="3635.P46518"/>
<dbReference type="PaxDb" id="3635-P46518"/>
<dbReference type="KEGG" id="ghi:107922715"/>
<dbReference type="OMA" id="MSANREI"/>
<dbReference type="Proteomes" id="UP000189702">
    <property type="component" value="Chromosome 26"/>
</dbReference>
<dbReference type="GO" id="GO:0009269">
    <property type="term" value="P:response to desiccation"/>
    <property type="evidence" value="ECO:0007669"/>
    <property type="project" value="InterPro"/>
</dbReference>
<dbReference type="FunFam" id="2.60.40.1820:FF:000001">
    <property type="entry name" value="Desiccation protectant protein Lea14-like"/>
    <property type="match status" value="1"/>
</dbReference>
<dbReference type="Gene3D" id="2.60.40.1820">
    <property type="match status" value="1"/>
</dbReference>
<dbReference type="InterPro" id="IPR045043">
    <property type="entry name" value="Lea14-like"/>
</dbReference>
<dbReference type="InterPro" id="IPR004864">
    <property type="entry name" value="LEA_2"/>
</dbReference>
<dbReference type="InterPro" id="IPR013990">
    <property type="entry name" value="WHy-dom"/>
</dbReference>
<dbReference type="PANTHER" id="PTHR31459">
    <property type="match status" value="1"/>
</dbReference>
<dbReference type="PANTHER" id="PTHR31459:SF19">
    <property type="entry name" value="DESICCATION-RELATED PROTEIN LEA14-RELATED"/>
    <property type="match status" value="1"/>
</dbReference>
<dbReference type="Pfam" id="PF03168">
    <property type="entry name" value="LEA_2"/>
    <property type="match status" value="1"/>
</dbReference>
<dbReference type="SMART" id="SM00769">
    <property type="entry name" value="WHy"/>
    <property type="match status" value="1"/>
</dbReference>
<dbReference type="SUPFAM" id="SSF117070">
    <property type="entry name" value="LEA14-like"/>
    <property type="match status" value="1"/>
</dbReference>
<keyword id="KW-1185">Reference proteome</keyword>
<keyword id="KW-0346">Stress response</keyword>
<feature type="chain" id="PRO_0000221235" description="Late embryogenesis abundant protein Lea14-A">
    <location>
        <begin position="1"/>
        <end position="151"/>
    </location>
</feature>
<organism>
    <name type="scientific">Gossypium hirsutum</name>
    <name type="common">Upland cotton</name>
    <name type="synonym">Gossypium mexicanum</name>
    <dbReference type="NCBI Taxonomy" id="3635"/>
    <lineage>
        <taxon>Eukaryota</taxon>
        <taxon>Viridiplantae</taxon>
        <taxon>Streptophyta</taxon>
        <taxon>Embryophyta</taxon>
        <taxon>Tracheophyta</taxon>
        <taxon>Spermatophyta</taxon>
        <taxon>Magnoliopsida</taxon>
        <taxon>eudicotyledons</taxon>
        <taxon>Gunneridae</taxon>
        <taxon>Pentapetalae</taxon>
        <taxon>rosids</taxon>
        <taxon>malvids</taxon>
        <taxon>Malvales</taxon>
        <taxon>Malvaceae</taxon>
        <taxon>Malvoideae</taxon>
        <taxon>Gossypium</taxon>
    </lineage>
</organism>
<proteinExistence type="evidence at transcript level"/>
<evidence type="ECO:0000305" key="1"/>
<sequence>MSQLLEKAKDFVVDKVANIKKPEASVSDVDLKHVSRECVEYGAKVSVSNPYSHSIPICEISYNFRSAGRGIASGTIPDPGSLKASDTTMLDVPVKVPYNILVSLVKDIGADWDIDYELELGLTIDLPIVGNFTIPLSQKGEIKLPTLSDIF</sequence>
<comment type="induction">
    <text>By water stress; in leaves.</text>
</comment>
<comment type="similarity">
    <text evidence="1">Belongs to the LEA type 2 family.</text>
</comment>
<accession>P46518</accession>